<organism>
    <name type="scientific">Arabidopsis thaliana</name>
    <name type="common">Mouse-ear cress</name>
    <dbReference type="NCBI Taxonomy" id="3702"/>
    <lineage>
        <taxon>Eukaryota</taxon>
        <taxon>Viridiplantae</taxon>
        <taxon>Streptophyta</taxon>
        <taxon>Embryophyta</taxon>
        <taxon>Tracheophyta</taxon>
        <taxon>Spermatophyta</taxon>
        <taxon>Magnoliopsida</taxon>
        <taxon>eudicotyledons</taxon>
        <taxon>Gunneridae</taxon>
        <taxon>Pentapetalae</taxon>
        <taxon>rosids</taxon>
        <taxon>malvids</taxon>
        <taxon>Brassicales</taxon>
        <taxon>Brassicaceae</taxon>
        <taxon>Camelineae</taxon>
        <taxon>Arabidopsis</taxon>
    </lineage>
</organism>
<sequence>MEIEKSNNGGSNPSAGEEFKDMIKGVTKFLMMVIFLGTIMLWIMMPTLTYRTKWLPHLRIKFGTSTYFGATGTTLFMYMFPMMVVACLGCVYLHFKNRKSPHHIDRETKGGVWSKLRKPMLVKGPLGIVSVTEITFLAMFVALLLWCFITYLRNSFATITPKSAAAHDESLWQAKLESAALRLGLIGNICLAFLFLPVARGSSLLPAMGLTSESSIKYHIWLGHMVMALFTVHGLCYIIYWASMHEISQMIMWDTKGVSNLAGEIALAAGLVMWATTYPKIRRRFFEVFFYTHYLYIVFMLFFVLHVGISFSFIALPGFYIFLVDRFLRFLQSRENVRLLAARILPSDTMELTFSKNSKLVYSPTSIMFVNIPSISKLQWHPFTITSSSKLEPEKLSIVIKKEGKWSTKLHQRLSSSDQIDRLAVSVEGPYGPASADFLRHEALVMVCGGSGITPFISVIRDLIATSQKETCKIPKITLICAFKKSSEISMLDLVLPLSGLETELSSDINIKIEAFITRDNDAGDEAKAGKIKTLWFKPSLSDQSISSILGPNSWLWLGAILASSFLIFMIIIGIITRYYIYPIDHNTNKIYSLTSKTIIYILVISVSIMATCSAAMLWNKKKYGKVESKQVQNVDRPSPTSSPTSSWGYNSLREIESTPQESLVQRTNLHFGERPNLKKLLLDVEGSSVGVLVCGPKKMRQKVAEICSSGLAENLHFESISFSW</sequence>
<gene>
    <name type="primary">FRO2</name>
    <name type="synonym">FRD1</name>
    <name type="ordered locus">At1g01580</name>
    <name type="ORF">F22L4.12</name>
</gene>
<accession>P92949</accession>
<accession>Q9LMM3</accession>
<proteinExistence type="evidence at protein level"/>
<feature type="chain" id="PRO_0000413200" description="Ferric reduction oxidase 2">
    <location>
        <begin position="1"/>
        <end position="725"/>
    </location>
</feature>
<feature type="topological domain" description="Cytoplasmic" evidence="9">
    <location>
        <begin position="1"/>
        <end position="28"/>
    </location>
</feature>
<feature type="transmembrane region" description="Helical">
    <location>
        <begin position="29"/>
        <end position="48"/>
    </location>
</feature>
<feature type="topological domain" description="Extracellular" evidence="9">
    <location>
        <begin position="49"/>
        <end position="74"/>
    </location>
</feature>
<feature type="transmembrane region" description="Helical">
    <location>
        <begin position="75"/>
        <end position="93"/>
    </location>
</feature>
<feature type="topological domain" description="Cytoplasmic" evidence="9">
    <location>
        <begin position="94"/>
        <end position="125"/>
    </location>
</feature>
<feature type="transmembrane region" description="Helical">
    <location>
        <begin position="126"/>
        <end position="149"/>
    </location>
</feature>
<feature type="topological domain" description="Extracellular" evidence="9">
    <location>
        <begin position="150"/>
        <end position="217"/>
    </location>
</feature>
<feature type="transmembrane region" description="Helical">
    <location>
        <begin position="218"/>
        <end position="241"/>
    </location>
</feature>
<feature type="topological domain" description="Cytoplasmic" evidence="9">
    <location>
        <begin position="242"/>
        <end position="291"/>
    </location>
</feature>
<feature type="transmembrane region" description="Helical">
    <location>
        <begin position="292"/>
        <end position="316"/>
    </location>
</feature>
<feature type="topological domain" description="Extracellular" evidence="9">
    <location>
        <begin position="317"/>
        <end position="338"/>
    </location>
</feature>
<feature type="transmembrane region" description="Helical">
    <location>
        <begin position="339"/>
        <end position="359"/>
    </location>
</feature>
<feature type="topological domain" description="Cytoplasmic" evidence="9">
    <location>
        <begin position="360"/>
        <end position="554"/>
    </location>
</feature>
<feature type="transmembrane region" description="Helical">
    <location>
        <begin position="555"/>
        <end position="577"/>
    </location>
</feature>
<feature type="topological domain" description="Extracellular" evidence="9">
    <location>
        <begin position="578"/>
        <end position="597"/>
    </location>
</feature>
<feature type="transmembrane region" description="Helical">
    <location>
        <begin position="598"/>
        <end position="619"/>
    </location>
</feature>
<feature type="topological domain" description="Cytoplasmic" evidence="9">
    <location>
        <begin position="620"/>
        <end position="725"/>
    </location>
</feature>
<feature type="domain" description="Ferric oxidoreductase">
    <location>
        <begin position="183"/>
        <end position="303"/>
    </location>
</feature>
<feature type="domain" description="FAD-binding FR-type" evidence="2">
    <location>
        <begin position="332"/>
        <end position="437"/>
    </location>
</feature>
<feature type="binding site" description="axial binding residue" evidence="13">
    <location>
        <position position="219"/>
    </location>
    <ligand>
        <name>heme</name>
        <dbReference type="ChEBI" id="CHEBI:30413"/>
    </ligand>
    <ligandPart>
        <name>Fe</name>
        <dbReference type="ChEBI" id="CHEBI:18248"/>
    </ligandPart>
</feature>
<feature type="binding site" description="axial binding residue" evidence="13">
    <location>
        <position position="233"/>
    </location>
    <ligand>
        <name>heme</name>
        <dbReference type="ChEBI" id="CHEBI:30413"/>
    </ligand>
    <ligandPart>
        <name>Fe</name>
        <dbReference type="ChEBI" id="CHEBI:18248"/>
    </ligandPart>
</feature>
<feature type="binding site" description="axial binding residue" evidence="13">
    <location>
        <position position="293"/>
    </location>
    <ligand>
        <name>heme</name>
        <dbReference type="ChEBI" id="CHEBI:30413"/>
    </ligand>
    <ligandPart>
        <name>Fe</name>
        <dbReference type="ChEBI" id="CHEBI:18248"/>
    </ligandPart>
</feature>
<feature type="binding site" description="axial binding residue" evidence="13">
    <location>
        <position position="306"/>
    </location>
    <ligand>
        <name>heme</name>
        <dbReference type="ChEBI" id="CHEBI:30413"/>
    </ligand>
    <ligandPart>
        <name>Fe</name>
        <dbReference type="ChEBI" id="CHEBI:18248"/>
    </ligandPart>
</feature>
<feature type="binding site" evidence="1">
    <location>
        <begin position="381"/>
        <end position="384"/>
    </location>
    <ligand>
        <name>FAD</name>
        <dbReference type="ChEBI" id="CHEBI:57692"/>
    </ligand>
</feature>
<feature type="binding site" evidence="1">
    <location>
        <begin position="429"/>
        <end position="432"/>
    </location>
    <ligand>
        <name>NAD(+)</name>
        <dbReference type="ChEBI" id="CHEBI:57540"/>
    </ligand>
</feature>
<feature type="mutagenesis site" description="In frd1-3; loss of induced ferric-chelate reductase activity." evidence="3">
    <original>T</original>
    <variation>M</variation>
    <location>
        <position position="384"/>
    </location>
</feature>
<comment type="function">
    <text evidence="3 5 6 11">Flavocytochrome that transfers electrons across the plasma membrane to reduce ferric iron chelates to form soluble ferrous iron in the rhizosphere. May be involved in the delivery of iron to developing pollen grains. Also acts as a copper-chelate reductase. Involved in glycine betaine-mediated chilling tolerance and reactive oxygen species accumulation.</text>
</comment>
<comment type="catalytic activity">
    <reaction>
        <text>2 a Fe(II)-siderophore + NAD(+) + H(+) = 2 a Fe(III)-siderophore + NADH</text>
        <dbReference type="Rhea" id="RHEA:15061"/>
        <dbReference type="Rhea" id="RHEA-COMP:11342"/>
        <dbReference type="Rhea" id="RHEA-COMP:11344"/>
        <dbReference type="ChEBI" id="CHEBI:15378"/>
        <dbReference type="ChEBI" id="CHEBI:29033"/>
        <dbReference type="ChEBI" id="CHEBI:29034"/>
        <dbReference type="ChEBI" id="CHEBI:57540"/>
        <dbReference type="ChEBI" id="CHEBI:57945"/>
        <dbReference type="EC" id="1.16.1.7"/>
    </reaction>
</comment>
<comment type="cofactor">
    <cofactor evidence="13">
        <name>FAD</name>
        <dbReference type="ChEBI" id="CHEBI:57692"/>
    </cofactor>
</comment>
<comment type="subcellular location">
    <subcellularLocation>
        <location evidence="8">Cell membrane</location>
        <topology evidence="8">Multi-pass membrane protein</topology>
    </subcellularLocation>
</comment>
<comment type="tissue specificity">
    <text evidence="3 5 6 7 8">Expressed in the epidermal cells of the roots. High expression in lateral roots and root hairs. Detected in leaves, stems, siliques and in flowers in anthers and styles.</text>
</comment>
<comment type="induction">
    <text evidence="3 4 5 7 10 11 12">Circadian-regulation. Up-regulated in roots by iron deficiency, carbon monoxide and by treatment with glycine betaine. Down-regulated by zinc, cadmium and cytokinin. Not regulated by copper.</text>
</comment>
<comment type="domain">
    <text evidence="9">The C-terminus is probably located inside the membrane.</text>
</comment>
<comment type="disruption phenotype">
    <text evidence="3">Impaired growth on media with no added iron. No response to glycine betaine in chilling assays.</text>
</comment>
<comment type="miscellaneous">
    <text>Post-transcriptionally regulated by iron. Coordinately regulated with the iron transport protein IRT1.</text>
</comment>
<comment type="similarity">
    <text evidence="13">Belongs to the ferric reductase (FRE) family.</text>
</comment>
<comment type="sequence caution" evidence="13">
    <conflict type="erroneous gene model prediction">
        <sequence resource="EMBL-CDS" id="AAF81316"/>
    </conflict>
</comment>
<name>FRO2_ARATH</name>
<reference key="1">
    <citation type="journal article" date="1999" name="Nature">
        <title>A ferric-chelate reductase for iron uptake from soils.</title>
        <authorList>
            <person name="Robinson N.J."/>
            <person name="Procter C.M."/>
            <person name="Connolly E.L."/>
            <person name="Guerinot M.L."/>
        </authorList>
    </citation>
    <scope>NUCLEOTIDE SEQUENCE [GENOMIC DNA / MRNA]</scope>
    <scope>FUNCTION</scope>
    <scope>MUTAGENESIS OF THR-384</scope>
    <scope>DISRUPTION PHENOTYPE</scope>
    <scope>TISSUE SPECIFICITY</scope>
    <scope>INDUCTION BY IRON</scope>
    <source>
        <strain>cv. Landsberg erecta</strain>
    </source>
</reference>
<reference key="2">
    <citation type="submission" date="2003-05" db="EMBL/GenBank/DDBJ databases">
        <title>Molecular Cloning of the FRO2 Gene from Arabidopsis roots.</title>
        <authorList>
            <person name="Yang J.H."/>
            <person name="Liu Y.J."/>
            <person name="Yang E.Q."/>
            <person name="Liu S.W."/>
            <person name="Liu Y.D."/>
            <person name="Li J.K."/>
            <person name="Wu C.X."/>
        </authorList>
    </citation>
    <scope>NUCLEOTIDE SEQUENCE [MRNA]</scope>
    <source>
        <tissue>Root</tissue>
    </source>
</reference>
<reference key="3">
    <citation type="journal article" date="2005" name="Plant Cell Physiol.">
        <title>Molecular and biochemical characterization of the Fe(III) chelate reductase gene family in Arabidopsis thaliana.</title>
        <authorList>
            <person name="Wu H."/>
            <person name="Li L."/>
            <person name="Du J."/>
            <person name="Yuan Y."/>
            <person name="Cheng X."/>
            <person name="Ling H.Q."/>
        </authorList>
    </citation>
    <scope>NUCLEOTIDE SEQUENCE [MRNA]</scope>
    <scope>FUNCTION</scope>
    <scope>TISSUE SPECIFICITY</scope>
</reference>
<reference key="4">
    <citation type="journal article" date="2000" name="Nature">
        <title>Sequence and analysis of chromosome 1 of the plant Arabidopsis thaliana.</title>
        <authorList>
            <person name="Theologis A."/>
            <person name="Ecker J.R."/>
            <person name="Palm C.J."/>
            <person name="Federspiel N.A."/>
            <person name="Kaul S."/>
            <person name="White O."/>
            <person name="Alonso J."/>
            <person name="Altafi H."/>
            <person name="Araujo R."/>
            <person name="Bowman C.L."/>
            <person name="Brooks S.Y."/>
            <person name="Buehler E."/>
            <person name="Chan A."/>
            <person name="Chao Q."/>
            <person name="Chen H."/>
            <person name="Cheuk R.F."/>
            <person name="Chin C.W."/>
            <person name="Chung M.K."/>
            <person name="Conn L."/>
            <person name="Conway A.B."/>
            <person name="Conway A.R."/>
            <person name="Creasy T.H."/>
            <person name="Dewar K."/>
            <person name="Dunn P."/>
            <person name="Etgu P."/>
            <person name="Feldblyum T.V."/>
            <person name="Feng J.-D."/>
            <person name="Fong B."/>
            <person name="Fujii C.Y."/>
            <person name="Gill J.E."/>
            <person name="Goldsmith A.D."/>
            <person name="Haas B."/>
            <person name="Hansen N.F."/>
            <person name="Hughes B."/>
            <person name="Huizar L."/>
            <person name="Hunter J.L."/>
            <person name="Jenkins J."/>
            <person name="Johnson-Hopson C."/>
            <person name="Khan S."/>
            <person name="Khaykin E."/>
            <person name="Kim C.J."/>
            <person name="Koo H.L."/>
            <person name="Kremenetskaia I."/>
            <person name="Kurtz D.B."/>
            <person name="Kwan A."/>
            <person name="Lam B."/>
            <person name="Langin-Hooper S."/>
            <person name="Lee A."/>
            <person name="Lee J.M."/>
            <person name="Lenz C.A."/>
            <person name="Li J.H."/>
            <person name="Li Y.-P."/>
            <person name="Lin X."/>
            <person name="Liu S.X."/>
            <person name="Liu Z.A."/>
            <person name="Luros J.S."/>
            <person name="Maiti R."/>
            <person name="Marziali A."/>
            <person name="Militscher J."/>
            <person name="Miranda M."/>
            <person name="Nguyen M."/>
            <person name="Nierman W.C."/>
            <person name="Osborne B.I."/>
            <person name="Pai G."/>
            <person name="Peterson J."/>
            <person name="Pham P.K."/>
            <person name="Rizzo M."/>
            <person name="Rooney T."/>
            <person name="Rowley D."/>
            <person name="Sakano H."/>
            <person name="Salzberg S.L."/>
            <person name="Schwartz J.R."/>
            <person name="Shinn P."/>
            <person name="Southwick A.M."/>
            <person name="Sun H."/>
            <person name="Tallon L.J."/>
            <person name="Tambunga G."/>
            <person name="Toriumi M.J."/>
            <person name="Town C.D."/>
            <person name="Utterback T."/>
            <person name="Van Aken S."/>
            <person name="Vaysberg M."/>
            <person name="Vysotskaia V.S."/>
            <person name="Walker M."/>
            <person name="Wu D."/>
            <person name="Yu G."/>
            <person name="Fraser C.M."/>
            <person name="Venter J.C."/>
            <person name="Davis R.W."/>
        </authorList>
    </citation>
    <scope>NUCLEOTIDE SEQUENCE [LARGE SCALE GENOMIC DNA]</scope>
    <source>
        <strain>cv. Columbia</strain>
    </source>
</reference>
<reference key="5">
    <citation type="journal article" date="2017" name="Plant J.">
        <title>Araport11: a complete reannotation of the Arabidopsis thaliana reference genome.</title>
        <authorList>
            <person name="Cheng C.Y."/>
            <person name="Krishnakumar V."/>
            <person name="Chan A.P."/>
            <person name="Thibaud-Nissen F."/>
            <person name="Schobel S."/>
            <person name="Town C.D."/>
        </authorList>
    </citation>
    <scope>GENOME REANNOTATION</scope>
    <source>
        <strain>cv. Columbia</strain>
    </source>
</reference>
<reference key="6">
    <citation type="journal article" date="2003" name="Plant Physiol.">
        <title>Dual regulation of the Arabidopsis high-affinity root iron uptake system by local and long-distance signals.</title>
        <authorList>
            <person name="Vert G.A."/>
            <person name="Briat J.F."/>
            <person name="Curie C."/>
        </authorList>
    </citation>
    <scope>INDUCTION</scope>
</reference>
<reference key="7">
    <citation type="journal article" date="2003" name="Plant Physiol.">
        <title>Overexpression of the FRO2 ferric chelate reductase confers tolerance to growth on low iron and uncovers posttranscriptional control.</title>
        <authorList>
            <person name="Connolly E.L."/>
            <person name="Campbell N.H."/>
            <person name="Grotz N."/>
            <person name="Prichard C.L."/>
            <person name="Guerinot M.L."/>
        </authorList>
    </citation>
    <scope>FUNCTION</scope>
    <scope>INDUCTION BY IRON; CADMIUM AND ZINC</scope>
    <scope>TISSUE SPECIFICITY</scope>
</reference>
<reference key="8">
    <citation type="journal article" date="2006" name="Planta">
        <title>Expression profiling of the Arabidopsis ferric chelate reductase (FRO) gene family reveals differential regulation by iron and copper.</title>
        <authorList>
            <person name="Mukherjee I."/>
            <person name="Campbell N.H."/>
            <person name="Ash J.S."/>
            <person name="Connolly E.L."/>
        </authorList>
    </citation>
    <scope>TISSUE SPECIFICITY</scope>
    <scope>INDUCTION BY IRON AND COPPER</scope>
</reference>
<reference key="9">
    <citation type="journal article" date="2006" name="Plant J.">
        <title>Arabidopsis cpFtsY mutants exhibit pleiotropic defects including an inability to increase iron deficiency-inducible root Fe(III) chelate reductase activity.</title>
        <authorList>
            <person name="Durrett T.P."/>
            <person name="Connolly E.L."/>
            <person name="Rogers E.E."/>
        </authorList>
    </citation>
    <scope>SUBCELLULAR LOCATION</scope>
    <scope>TISSUE SPECIFICITY</scope>
</reference>
<reference key="10">
    <citation type="journal article" date="2006" name="Plant Mol. Biol.">
        <title>Transmembrane topology of FRO2, a ferric chelate reductase from Arabidopsis thaliana.</title>
        <authorList>
            <person name="Schagerloef U."/>
            <person name="Wilson G."/>
            <person name="Hebert H."/>
            <person name="Al-Karadaghi S."/>
            <person name="Haegerhaell C."/>
        </authorList>
    </citation>
    <scope>TOPOLOGY</scope>
</reference>
<reference key="11">
    <citation type="journal article" date="2008" name="Plant J.">
        <title>Cytokinins negatively regulate the root iron uptake machinery in Arabidopsis through a growth-dependent pathway.</title>
        <authorList>
            <person name="Seguela M."/>
            <person name="Briat J.-F."/>
            <person name="Vert G."/>
            <person name="Curie C."/>
        </authorList>
    </citation>
    <scope>INDUCTION BY CYTOKININ</scope>
</reference>
<reference key="12">
    <citation type="journal article" date="2008" name="Physiol. Plantarum">
        <title>The FRO2 ferric reductase is required for glycine betaine's effect on chilling tolerance in Arabidopsis roots.</title>
        <authorList>
            <person name="Einset J."/>
            <person name="Winge P."/>
            <person name="Bones A.M."/>
            <person name="Connolly E.L."/>
        </authorList>
    </citation>
    <scope>FUNCTION</scope>
    <scope>INDUCTION BY GLYCINE BETAINE</scope>
</reference>
<reference key="13">
    <citation type="journal article" date="2009" name="Plant Sci.">
        <title>Iron uptake mechanisms in plants: Functions of the FRO family of ferric reductases.</title>
        <authorList>
            <person name="Jeong J."/>
            <person name="Connolly E.L."/>
        </authorList>
    </citation>
    <scope>GENE FAMILY</scope>
    <scope>NOMENCLATURE</scope>
</reference>
<reference key="14">
    <citation type="journal article" date="2010" name="Plant Biotechnol. J.">
        <title>Carbon monoxide improves adaptation of Arabidopsis to iron deficiency.</title>
        <authorList>
            <person name="Kong W.W."/>
            <person name="Zhang L.P."/>
            <person name="Guo K."/>
            <person name="Liu Z.P."/>
            <person name="Yang Z.M."/>
        </authorList>
    </citation>
    <scope>INDUCTION BY CARBON MONOXIDE</scope>
</reference>
<dbReference type="EC" id="1.16.1.7"/>
<dbReference type="EMBL" id="Y09581">
    <property type="protein sequence ID" value="CAA70770.1"/>
    <property type="molecule type" value="Genomic_DNA"/>
</dbReference>
<dbReference type="EMBL" id="AY302057">
    <property type="protein sequence ID" value="AAP51420.1"/>
    <property type="molecule type" value="mRNA"/>
</dbReference>
<dbReference type="EMBL" id="AC061957">
    <property type="protein sequence ID" value="AAF81316.1"/>
    <property type="status" value="ALT_SEQ"/>
    <property type="molecule type" value="Genomic_DNA"/>
</dbReference>
<dbReference type="EMBL" id="CP002684">
    <property type="protein sequence ID" value="AEE27308.1"/>
    <property type="molecule type" value="Genomic_DNA"/>
</dbReference>
<dbReference type="PIR" id="E86146">
    <property type="entry name" value="E86146"/>
</dbReference>
<dbReference type="RefSeq" id="NP_171664.1">
    <property type="nucleotide sequence ID" value="NM_100040.3"/>
</dbReference>
<dbReference type="SMR" id="P92949"/>
<dbReference type="BioGRID" id="24646">
    <property type="interactions" value="1"/>
</dbReference>
<dbReference type="FunCoup" id="P92949">
    <property type="interactions" value="65"/>
</dbReference>
<dbReference type="IntAct" id="P92949">
    <property type="interactions" value="1"/>
</dbReference>
<dbReference type="STRING" id="3702.P92949"/>
<dbReference type="TCDB" id="5.B.1.4.4">
    <property type="family name" value="the phagocyte (gp91(phox)) nadph oxidase family"/>
</dbReference>
<dbReference type="GlyGen" id="P92949">
    <property type="glycosylation" value="1 site"/>
</dbReference>
<dbReference type="iPTMnet" id="P92949"/>
<dbReference type="PaxDb" id="3702-AT1G01580.1"/>
<dbReference type="ProteomicsDB" id="230043"/>
<dbReference type="EnsemblPlants" id="AT1G01580.1">
    <property type="protein sequence ID" value="AT1G01580.1"/>
    <property type="gene ID" value="AT1G01580"/>
</dbReference>
<dbReference type="GeneID" id="839411"/>
<dbReference type="Gramene" id="AT1G01580.1">
    <property type="protein sequence ID" value="AT1G01580.1"/>
    <property type="gene ID" value="AT1G01580"/>
</dbReference>
<dbReference type="KEGG" id="ath:AT1G01580"/>
<dbReference type="Araport" id="AT1G01580"/>
<dbReference type="TAIR" id="AT1G01580">
    <property type="gene designation" value="FRO2"/>
</dbReference>
<dbReference type="eggNOG" id="KOG0039">
    <property type="taxonomic scope" value="Eukaryota"/>
</dbReference>
<dbReference type="HOGENOM" id="CLU_014777_1_0_1"/>
<dbReference type="InParanoid" id="P92949"/>
<dbReference type="PhylomeDB" id="P92949"/>
<dbReference type="BioCyc" id="ARA:AT1G01580-MONOMER"/>
<dbReference type="BRENDA" id="1.16.1.10">
    <property type="organism ID" value="399"/>
</dbReference>
<dbReference type="PRO" id="PR:P92949"/>
<dbReference type="Proteomes" id="UP000006548">
    <property type="component" value="Chromosome 1"/>
</dbReference>
<dbReference type="ExpressionAtlas" id="P92949">
    <property type="expression patterns" value="baseline and differential"/>
</dbReference>
<dbReference type="GO" id="GO:0005886">
    <property type="term" value="C:plasma membrane"/>
    <property type="evidence" value="ECO:0000314"/>
    <property type="project" value="TAIR"/>
</dbReference>
<dbReference type="GO" id="GO:0140618">
    <property type="term" value="F:ferric-chelate reductase (NADH) activity"/>
    <property type="evidence" value="ECO:0007669"/>
    <property type="project" value="UniProtKB-EC"/>
</dbReference>
<dbReference type="GO" id="GO:0000293">
    <property type="term" value="F:ferric-chelate reductase activity"/>
    <property type="evidence" value="ECO:0000314"/>
    <property type="project" value="TAIR"/>
</dbReference>
<dbReference type="GO" id="GO:0046872">
    <property type="term" value="F:metal ion binding"/>
    <property type="evidence" value="ECO:0007669"/>
    <property type="project" value="UniProtKB-KW"/>
</dbReference>
<dbReference type="GO" id="GO:0009617">
    <property type="term" value="P:response to bacterium"/>
    <property type="evidence" value="ECO:0000270"/>
    <property type="project" value="TAIR"/>
</dbReference>
<dbReference type="GO" id="GO:0033214">
    <property type="term" value="P:siderophore-dependent iron import into cell"/>
    <property type="evidence" value="ECO:0000315"/>
    <property type="project" value="TAIR"/>
</dbReference>
<dbReference type="CDD" id="cd06186">
    <property type="entry name" value="NOX_Duox_like_FAD_NADP"/>
    <property type="match status" value="1"/>
</dbReference>
<dbReference type="FunFam" id="2.40.30.10:FF:000251">
    <property type="entry name" value="Ferric reduction oxidase 2"/>
    <property type="match status" value="1"/>
</dbReference>
<dbReference type="FunFam" id="3.40.50.80:FF:000083">
    <property type="entry name" value="Ferric reduction oxidase 2"/>
    <property type="match status" value="1"/>
</dbReference>
<dbReference type="FunFam" id="3.40.50.80:FF:000100">
    <property type="entry name" value="Ferric reduction oxidase 2"/>
    <property type="match status" value="1"/>
</dbReference>
<dbReference type="Gene3D" id="3.40.50.80">
    <property type="entry name" value="Nucleotide-binding domain of ferredoxin-NADP reductase (FNR) module"/>
    <property type="match status" value="2"/>
</dbReference>
<dbReference type="Gene3D" id="2.40.30.10">
    <property type="entry name" value="Translation factors"/>
    <property type="match status" value="1"/>
</dbReference>
<dbReference type="InterPro" id="IPR013112">
    <property type="entry name" value="FAD-bd_8"/>
</dbReference>
<dbReference type="InterPro" id="IPR017927">
    <property type="entry name" value="FAD-bd_FR_type"/>
</dbReference>
<dbReference type="InterPro" id="IPR013130">
    <property type="entry name" value="Fe3_Rdtase_TM_dom"/>
</dbReference>
<dbReference type="InterPro" id="IPR013121">
    <property type="entry name" value="Fe_red_NAD-bd_6"/>
</dbReference>
<dbReference type="InterPro" id="IPR039261">
    <property type="entry name" value="FNR_nucleotide-bd"/>
</dbReference>
<dbReference type="InterPro" id="IPR050369">
    <property type="entry name" value="RBOH/FRE"/>
</dbReference>
<dbReference type="InterPro" id="IPR017938">
    <property type="entry name" value="Riboflavin_synthase-like_b-brl"/>
</dbReference>
<dbReference type="PANTHER" id="PTHR11972:SF41">
    <property type="entry name" value="FERRIC REDUCTION OXIDASE 2"/>
    <property type="match status" value="1"/>
</dbReference>
<dbReference type="PANTHER" id="PTHR11972">
    <property type="entry name" value="NADPH OXIDASE"/>
    <property type="match status" value="1"/>
</dbReference>
<dbReference type="Pfam" id="PF08022">
    <property type="entry name" value="FAD_binding_8"/>
    <property type="match status" value="1"/>
</dbReference>
<dbReference type="Pfam" id="PF01794">
    <property type="entry name" value="Ferric_reduct"/>
    <property type="match status" value="1"/>
</dbReference>
<dbReference type="Pfam" id="PF08030">
    <property type="entry name" value="NAD_binding_6"/>
    <property type="match status" value="1"/>
</dbReference>
<dbReference type="SFLD" id="SFLDS00052">
    <property type="entry name" value="Ferric_Reductase_Domain"/>
    <property type="match status" value="1"/>
</dbReference>
<dbReference type="SFLD" id="SFLDG01168">
    <property type="entry name" value="Ferric_reductase_subgroup_(FRE"/>
    <property type="match status" value="1"/>
</dbReference>
<dbReference type="SUPFAM" id="SSF52343">
    <property type="entry name" value="Ferredoxin reductase-like, C-terminal NADP-linked domain"/>
    <property type="match status" value="1"/>
</dbReference>
<dbReference type="SUPFAM" id="SSF63380">
    <property type="entry name" value="Riboflavin synthase domain-like"/>
    <property type="match status" value="1"/>
</dbReference>
<dbReference type="PROSITE" id="PS51384">
    <property type="entry name" value="FAD_FR"/>
    <property type="match status" value="1"/>
</dbReference>
<keyword id="KW-1003">Cell membrane</keyword>
<keyword id="KW-0249">Electron transport</keyword>
<keyword id="KW-0274">FAD</keyword>
<keyword id="KW-0285">Flavoprotein</keyword>
<keyword id="KW-0349">Heme</keyword>
<keyword id="KW-0406">Ion transport</keyword>
<keyword id="KW-0408">Iron</keyword>
<keyword id="KW-0472">Membrane</keyword>
<keyword id="KW-0479">Metal-binding</keyword>
<keyword id="KW-0520">NAD</keyword>
<keyword id="KW-0560">Oxidoreductase</keyword>
<keyword id="KW-1185">Reference proteome</keyword>
<keyword id="KW-0812">Transmembrane</keyword>
<keyword id="KW-1133">Transmembrane helix</keyword>
<keyword id="KW-0813">Transport</keyword>
<protein>
    <recommendedName>
        <fullName>Ferric reduction oxidase 2</fullName>
        <shortName>AtFRO2</shortName>
        <ecNumber>1.16.1.7</ecNumber>
    </recommendedName>
    <alternativeName>
        <fullName>Ferric-chelate reductase 2</fullName>
    </alternativeName>
    <alternativeName>
        <fullName>Protein FERRIC CHELATE REDUCTASE DEFECTIVE 1</fullName>
    </alternativeName>
</protein>
<evidence type="ECO:0000255" key="1"/>
<evidence type="ECO:0000255" key="2">
    <source>
        <dbReference type="PROSITE-ProRule" id="PRU00716"/>
    </source>
</evidence>
<evidence type="ECO:0000269" key="3">
    <source>
    </source>
</evidence>
<evidence type="ECO:0000269" key="4">
    <source>
    </source>
</evidence>
<evidence type="ECO:0000269" key="5">
    <source>
    </source>
</evidence>
<evidence type="ECO:0000269" key="6">
    <source>
    </source>
</evidence>
<evidence type="ECO:0000269" key="7">
    <source>
    </source>
</evidence>
<evidence type="ECO:0000269" key="8">
    <source>
    </source>
</evidence>
<evidence type="ECO:0000269" key="9">
    <source>
    </source>
</evidence>
<evidence type="ECO:0000269" key="10">
    <source>
    </source>
</evidence>
<evidence type="ECO:0000269" key="11">
    <source>
    </source>
</evidence>
<evidence type="ECO:0000269" key="12">
    <source>
    </source>
</evidence>
<evidence type="ECO:0000305" key="13"/>